<gene>
    <name evidence="1" type="primary">dapB</name>
    <name type="ordered locus">Bcep18194_A3737</name>
</gene>
<evidence type="ECO:0000255" key="1">
    <source>
        <dbReference type="HAMAP-Rule" id="MF_00102"/>
    </source>
</evidence>
<evidence type="ECO:0000305" key="2"/>
<comment type="function">
    <text evidence="1">Catalyzes the conversion of 4-hydroxy-tetrahydrodipicolinate (HTPA) to tetrahydrodipicolinate.</text>
</comment>
<comment type="catalytic activity">
    <reaction evidence="1">
        <text>(S)-2,3,4,5-tetrahydrodipicolinate + NAD(+) + H2O = (2S,4S)-4-hydroxy-2,3,4,5-tetrahydrodipicolinate + NADH + H(+)</text>
        <dbReference type="Rhea" id="RHEA:35323"/>
        <dbReference type="ChEBI" id="CHEBI:15377"/>
        <dbReference type="ChEBI" id="CHEBI:15378"/>
        <dbReference type="ChEBI" id="CHEBI:16845"/>
        <dbReference type="ChEBI" id="CHEBI:57540"/>
        <dbReference type="ChEBI" id="CHEBI:57945"/>
        <dbReference type="ChEBI" id="CHEBI:67139"/>
        <dbReference type="EC" id="1.17.1.8"/>
    </reaction>
</comment>
<comment type="catalytic activity">
    <reaction evidence="1">
        <text>(S)-2,3,4,5-tetrahydrodipicolinate + NADP(+) + H2O = (2S,4S)-4-hydroxy-2,3,4,5-tetrahydrodipicolinate + NADPH + H(+)</text>
        <dbReference type="Rhea" id="RHEA:35331"/>
        <dbReference type="ChEBI" id="CHEBI:15377"/>
        <dbReference type="ChEBI" id="CHEBI:15378"/>
        <dbReference type="ChEBI" id="CHEBI:16845"/>
        <dbReference type="ChEBI" id="CHEBI:57783"/>
        <dbReference type="ChEBI" id="CHEBI:58349"/>
        <dbReference type="ChEBI" id="CHEBI:67139"/>
        <dbReference type="EC" id="1.17.1.8"/>
    </reaction>
</comment>
<comment type="pathway">
    <text evidence="1">Amino-acid biosynthesis; L-lysine biosynthesis via DAP pathway; (S)-tetrahydrodipicolinate from L-aspartate: step 4/4.</text>
</comment>
<comment type="subcellular location">
    <subcellularLocation>
        <location evidence="1">Cytoplasm</location>
    </subcellularLocation>
</comment>
<comment type="similarity">
    <text evidence="1">Belongs to the DapB family.</text>
</comment>
<comment type="caution">
    <text evidence="2">Was originally thought to be a dihydrodipicolinate reductase (DHDPR), catalyzing the conversion of dihydrodipicolinate to tetrahydrodipicolinate. However, it was shown in E.coli that the substrate of the enzymatic reaction is not dihydrodipicolinate (DHDP) but in fact (2S,4S)-4-hydroxy-2,3,4,5-tetrahydrodipicolinic acid (HTPA), the product released by the DapA-catalyzed reaction.</text>
</comment>
<organism>
    <name type="scientific">Burkholderia lata (strain ATCC 17760 / DSM 23089 / LMG 22485 / NCIMB 9086 / R18194 / 383)</name>
    <dbReference type="NCBI Taxonomy" id="482957"/>
    <lineage>
        <taxon>Bacteria</taxon>
        <taxon>Pseudomonadati</taxon>
        <taxon>Pseudomonadota</taxon>
        <taxon>Betaproteobacteria</taxon>
        <taxon>Burkholderiales</taxon>
        <taxon>Burkholderiaceae</taxon>
        <taxon>Burkholderia</taxon>
        <taxon>Burkholderia cepacia complex</taxon>
    </lineage>
</organism>
<proteinExistence type="inferred from homology"/>
<feature type="chain" id="PRO_0000228335" description="4-hydroxy-tetrahydrodipicolinate reductase">
    <location>
        <begin position="1"/>
        <end position="265"/>
    </location>
</feature>
<feature type="active site" description="Proton donor/acceptor" evidence="1">
    <location>
        <position position="153"/>
    </location>
</feature>
<feature type="active site" description="Proton donor" evidence="1">
    <location>
        <position position="157"/>
    </location>
</feature>
<feature type="binding site" evidence="1">
    <location>
        <begin position="7"/>
        <end position="12"/>
    </location>
    <ligand>
        <name>NAD(+)</name>
        <dbReference type="ChEBI" id="CHEBI:57540"/>
    </ligand>
</feature>
<feature type="binding site" evidence="1">
    <location>
        <position position="33"/>
    </location>
    <ligand>
        <name>NAD(+)</name>
        <dbReference type="ChEBI" id="CHEBI:57540"/>
    </ligand>
</feature>
<feature type="binding site" evidence="1">
    <location>
        <position position="34"/>
    </location>
    <ligand>
        <name>NADP(+)</name>
        <dbReference type="ChEBI" id="CHEBI:58349"/>
    </ligand>
</feature>
<feature type="binding site" evidence="1">
    <location>
        <begin position="96"/>
        <end position="98"/>
    </location>
    <ligand>
        <name>NAD(+)</name>
        <dbReference type="ChEBI" id="CHEBI:57540"/>
    </ligand>
</feature>
<feature type="binding site" evidence="1">
    <location>
        <begin position="120"/>
        <end position="123"/>
    </location>
    <ligand>
        <name>NAD(+)</name>
        <dbReference type="ChEBI" id="CHEBI:57540"/>
    </ligand>
</feature>
<feature type="binding site" evidence="1">
    <location>
        <position position="154"/>
    </location>
    <ligand>
        <name>(S)-2,3,4,5-tetrahydrodipicolinate</name>
        <dbReference type="ChEBI" id="CHEBI:16845"/>
    </ligand>
</feature>
<feature type="binding site" evidence="1">
    <location>
        <begin position="163"/>
        <end position="164"/>
    </location>
    <ligand>
        <name>(S)-2,3,4,5-tetrahydrodipicolinate</name>
        <dbReference type="ChEBI" id="CHEBI:16845"/>
    </ligand>
</feature>
<reference key="1">
    <citation type="submission" date="2005-10" db="EMBL/GenBank/DDBJ databases">
        <title>Complete sequence of chromosome 1 of Burkholderia sp. 383.</title>
        <authorList>
            <consortium name="US DOE Joint Genome Institute"/>
            <person name="Copeland A."/>
            <person name="Lucas S."/>
            <person name="Lapidus A."/>
            <person name="Barry K."/>
            <person name="Detter J.C."/>
            <person name="Glavina T."/>
            <person name="Hammon N."/>
            <person name="Israni S."/>
            <person name="Pitluck S."/>
            <person name="Chain P."/>
            <person name="Malfatti S."/>
            <person name="Shin M."/>
            <person name="Vergez L."/>
            <person name="Schmutz J."/>
            <person name="Larimer F."/>
            <person name="Land M."/>
            <person name="Kyrpides N."/>
            <person name="Lykidis A."/>
            <person name="Richardson P."/>
        </authorList>
    </citation>
    <scope>NUCLEOTIDE SEQUENCE [LARGE SCALE GENOMIC DNA]</scope>
    <source>
        <strain>ATCC 17760 / DSM 23089 / LMG 22485 / NCIMB 9086 / R18194 / 383</strain>
    </source>
</reference>
<keyword id="KW-0028">Amino-acid biosynthesis</keyword>
<keyword id="KW-0963">Cytoplasm</keyword>
<keyword id="KW-0220">Diaminopimelate biosynthesis</keyword>
<keyword id="KW-0457">Lysine biosynthesis</keyword>
<keyword id="KW-0520">NAD</keyword>
<keyword id="KW-0521">NADP</keyword>
<keyword id="KW-0560">Oxidoreductase</keyword>
<sequence length="265" mass="27794">MKIAIAGASGRMGRMLIEAVLNDSDAQLVGALDRADSPFLGQDAGTFLGKETGVKLTADLDAVFAQADTLIDFTRPEGTMAHIEAALRHDVKLVIGTTGFTAEQKAELQAAAGKIGIVFAANMSVGVNVTLKLLEFAAKHFSHGYDIEIIEAHHRHKVDAPSGTALMMGEAVAGALGRSLDDCAVYGRHGVTGERDPSSIGFAAVRGGDIVGDHTVLFAGIGERIEITHKSSSRVSYAQGALRAVHFLSARGAGLFDMQDVLGLR</sequence>
<accession>Q39JM8</accession>
<protein>
    <recommendedName>
        <fullName evidence="1">4-hydroxy-tetrahydrodipicolinate reductase</fullName>
        <shortName evidence="1">HTPA reductase</shortName>
        <ecNumber evidence="1">1.17.1.8</ecNumber>
    </recommendedName>
</protein>
<name>DAPB_BURL3</name>
<dbReference type="EC" id="1.17.1.8" evidence="1"/>
<dbReference type="EMBL" id="CP000151">
    <property type="protein sequence ID" value="ABB07338.1"/>
    <property type="molecule type" value="Genomic_DNA"/>
</dbReference>
<dbReference type="RefSeq" id="WP_011350928.1">
    <property type="nucleotide sequence ID" value="NC_007510.1"/>
</dbReference>
<dbReference type="SMR" id="Q39JM8"/>
<dbReference type="GeneID" id="45093651"/>
<dbReference type="KEGG" id="bur:Bcep18194_A3737"/>
<dbReference type="PATRIC" id="fig|482957.22.peg.594"/>
<dbReference type="HOGENOM" id="CLU_047479_2_1_4"/>
<dbReference type="UniPathway" id="UPA00034">
    <property type="reaction ID" value="UER00018"/>
</dbReference>
<dbReference type="Proteomes" id="UP000002705">
    <property type="component" value="Chromosome 1"/>
</dbReference>
<dbReference type="GO" id="GO:0005829">
    <property type="term" value="C:cytosol"/>
    <property type="evidence" value="ECO:0007669"/>
    <property type="project" value="TreeGrafter"/>
</dbReference>
<dbReference type="GO" id="GO:0008839">
    <property type="term" value="F:4-hydroxy-tetrahydrodipicolinate reductase"/>
    <property type="evidence" value="ECO:0007669"/>
    <property type="project" value="UniProtKB-EC"/>
</dbReference>
<dbReference type="GO" id="GO:0051287">
    <property type="term" value="F:NAD binding"/>
    <property type="evidence" value="ECO:0007669"/>
    <property type="project" value="UniProtKB-UniRule"/>
</dbReference>
<dbReference type="GO" id="GO:0050661">
    <property type="term" value="F:NADP binding"/>
    <property type="evidence" value="ECO:0007669"/>
    <property type="project" value="UniProtKB-UniRule"/>
</dbReference>
<dbReference type="GO" id="GO:0016726">
    <property type="term" value="F:oxidoreductase activity, acting on CH or CH2 groups, NAD or NADP as acceptor"/>
    <property type="evidence" value="ECO:0007669"/>
    <property type="project" value="UniProtKB-UniRule"/>
</dbReference>
<dbReference type="GO" id="GO:0019877">
    <property type="term" value="P:diaminopimelate biosynthetic process"/>
    <property type="evidence" value="ECO:0007669"/>
    <property type="project" value="UniProtKB-UniRule"/>
</dbReference>
<dbReference type="GO" id="GO:0009089">
    <property type="term" value="P:lysine biosynthetic process via diaminopimelate"/>
    <property type="evidence" value="ECO:0007669"/>
    <property type="project" value="UniProtKB-UniRule"/>
</dbReference>
<dbReference type="CDD" id="cd02274">
    <property type="entry name" value="DHDPR_N"/>
    <property type="match status" value="1"/>
</dbReference>
<dbReference type="FunFam" id="3.30.360.10:FF:000004">
    <property type="entry name" value="4-hydroxy-tetrahydrodipicolinate reductase"/>
    <property type="match status" value="1"/>
</dbReference>
<dbReference type="FunFam" id="3.40.50.720:FF:000048">
    <property type="entry name" value="4-hydroxy-tetrahydrodipicolinate reductase"/>
    <property type="match status" value="1"/>
</dbReference>
<dbReference type="Gene3D" id="3.30.360.10">
    <property type="entry name" value="Dihydrodipicolinate Reductase, domain 2"/>
    <property type="match status" value="1"/>
</dbReference>
<dbReference type="Gene3D" id="3.40.50.720">
    <property type="entry name" value="NAD(P)-binding Rossmann-like Domain"/>
    <property type="match status" value="1"/>
</dbReference>
<dbReference type="HAMAP" id="MF_00102">
    <property type="entry name" value="DapB"/>
    <property type="match status" value="1"/>
</dbReference>
<dbReference type="InterPro" id="IPR022663">
    <property type="entry name" value="DapB_C"/>
</dbReference>
<dbReference type="InterPro" id="IPR000846">
    <property type="entry name" value="DapB_N"/>
</dbReference>
<dbReference type="InterPro" id="IPR022664">
    <property type="entry name" value="DapB_N_CS"/>
</dbReference>
<dbReference type="InterPro" id="IPR023940">
    <property type="entry name" value="DHDPR_bac"/>
</dbReference>
<dbReference type="InterPro" id="IPR036291">
    <property type="entry name" value="NAD(P)-bd_dom_sf"/>
</dbReference>
<dbReference type="NCBIfam" id="TIGR00036">
    <property type="entry name" value="dapB"/>
    <property type="match status" value="1"/>
</dbReference>
<dbReference type="PANTHER" id="PTHR20836:SF0">
    <property type="entry name" value="4-HYDROXY-TETRAHYDRODIPICOLINATE REDUCTASE 1, CHLOROPLASTIC-RELATED"/>
    <property type="match status" value="1"/>
</dbReference>
<dbReference type="PANTHER" id="PTHR20836">
    <property type="entry name" value="DIHYDRODIPICOLINATE REDUCTASE"/>
    <property type="match status" value="1"/>
</dbReference>
<dbReference type="Pfam" id="PF05173">
    <property type="entry name" value="DapB_C"/>
    <property type="match status" value="1"/>
</dbReference>
<dbReference type="Pfam" id="PF01113">
    <property type="entry name" value="DapB_N"/>
    <property type="match status" value="1"/>
</dbReference>
<dbReference type="PIRSF" id="PIRSF000161">
    <property type="entry name" value="DHPR"/>
    <property type="match status" value="1"/>
</dbReference>
<dbReference type="SUPFAM" id="SSF55347">
    <property type="entry name" value="Glyceraldehyde-3-phosphate dehydrogenase-like, C-terminal domain"/>
    <property type="match status" value="1"/>
</dbReference>
<dbReference type="SUPFAM" id="SSF51735">
    <property type="entry name" value="NAD(P)-binding Rossmann-fold domains"/>
    <property type="match status" value="1"/>
</dbReference>
<dbReference type="PROSITE" id="PS01298">
    <property type="entry name" value="DAPB"/>
    <property type="match status" value="1"/>
</dbReference>